<sequence>MSQPLTVECPTCGAPVEWKSDNKYRPFCSDRCKLIDLGAWAAEEHAIPGDTLEDDIFSADLPPREH</sequence>
<protein>
    <recommendedName>
        <fullName evidence="1">DNA gyrase inhibitor YacG</fullName>
    </recommendedName>
</protein>
<organism>
    <name type="scientific">Pseudomonas paraeruginosa (strain DSM 24068 / PA7)</name>
    <name type="common">Pseudomonas aeruginosa (strain PA7)</name>
    <dbReference type="NCBI Taxonomy" id="381754"/>
    <lineage>
        <taxon>Bacteria</taxon>
        <taxon>Pseudomonadati</taxon>
        <taxon>Pseudomonadota</taxon>
        <taxon>Gammaproteobacteria</taxon>
        <taxon>Pseudomonadales</taxon>
        <taxon>Pseudomonadaceae</taxon>
        <taxon>Pseudomonas</taxon>
        <taxon>Pseudomonas paraeruginosa</taxon>
    </lineage>
</organism>
<keyword id="KW-0479">Metal-binding</keyword>
<keyword id="KW-0862">Zinc</keyword>
<accession>A6VBR6</accession>
<evidence type="ECO:0000255" key="1">
    <source>
        <dbReference type="HAMAP-Rule" id="MF_00649"/>
    </source>
</evidence>
<dbReference type="EMBL" id="CP000744">
    <property type="protein sequence ID" value="ABR82032.1"/>
    <property type="molecule type" value="Genomic_DNA"/>
</dbReference>
<dbReference type="RefSeq" id="WP_003094656.1">
    <property type="nucleotide sequence ID" value="NC_009656.1"/>
</dbReference>
<dbReference type="SMR" id="A6VBR6"/>
<dbReference type="GeneID" id="77223033"/>
<dbReference type="KEGG" id="pap:PSPA7_5166"/>
<dbReference type="HOGENOM" id="CLU_178280_3_2_6"/>
<dbReference type="Proteomes" id="UP000001582">
    <property type="component" value="Chromosome"/>
</dbReference>
<dbReference type="GO" id="GO:0008657">
    <property type="term" value="F:DNA topoisomerase type II (double strand cut, ATP-hydrolyzing) inhibitor activity"/>
    <property type="evidence" value="ECO:0007669"/>
    <property type="project" value="UniProtKB-UniRule"/>
</dbReference>
<dbReference type="GO" id="GO:0008270">
    <property type="term" value="F:zinc ion binding"/>
    <property type="evidence" value="ECO:0007669"/>
    <property type="project" value="UniProtKB-UniRule"/>
</dbReference>
<dbReference type="GO" id="GO:0006355">
    <property type="term" value="P:regulation of DNA-templated transcription"/>
    <property type="evidence" value="ECO:0007669"/>
    <property type="project" value="InterPro"/>
</dbReference>
<dbReference type="Gene3D" id="3.30.50.10">
    <property type="entry name" value="Erythroid Transcription Factor GATA-1, subunit A"/>
    <property type="match status" value="1"/>
</dbReference>
<dbReference type="HAMAP" id="MF_00649">
    <property type="entry name" value="DNA_gyrase_inhibitor_YacG"/>
    <property type="match status" value="1"/>
</dbReference>
<dbReference type="InterPro" id="IPR005584">
    <property type="entry name" value="DNA_gyrase_inhibitor_YacG"/>
</dbReference>
<dbReference type="InterPro" id="IPR013088">
    <property type="entry name" value="Znf_NHR/GATA"/>
</dbReference>
<dbReference type="NCBIfam" id="NF001638">
    <property type="entry name" value="PRK00418.1"/>
    <property type="match status" value="1"/>
</dbReference>
<dbReference type="PANTHER" id="PTHR36150">
    <property type="entry name" value="DNA GYRASE INHIBITOR YACG"/>
    <property type="match status" value="1"/>
</dbReference>
<dbReference type="PANTHER" id="PTHR36150:SF1">
    <property type="entry name" value="DNA GYRASE INHIBITOR YACG"/>
    <property type="match status" value="1"/>
</dbReference>
<dbReference type="Pfam" id="PF03884">
    <property type="entry name" value="YacG"/>
    <property type="match status" value="1"/>
</dbReference>
<dbReference type="SUPFAM" id="SSF57716">
    <property type="entry name" value="Glucocorticoid receptor-like (DNA-binding domain)"/>
    <property type="match status" value="1"/>
</dbReference>
<proteinExistence type="inferred from homology"/>
<comment type="function">
    <text evidence="1">Inhibits all the catalytic activities of DNA gyrase by preventing its interaction with DNA. Acts by binding directly to the C-terminal domain of GyrB, which probably disrupts DNA binding by the gyrase.</text>
</comment>
<comment type="cofactor">
    <cofactor evidence="1">
        <name>Zn(2+)</name>
        <dbReference type="ChEBI" id="CHEBI:29105"/>
    </cofactor>
    <text evidence="1">Binds 1 zinc ion.</text>
</comment>
<comment type="subunit">
    <text evidence="1">Interacts with GyrB.</text>
</comment>
<comment type="similarity">
    <text evidence="1">Belongs to the DNA gyrase inhibitor YacG family.</text>
</comment>
<gene>
    <name evidence="1" type="primary">yacG</name>
    <name type="ordered locus">PSPA7_5166</name>
</gene>
<reference key="1">
    <citation type="submission" date="2007-06" db="EMBL/GenBank/DDBJ databases">
        <authorList>
            <person name="Dodson R.J."/>
            <person name="Harkins D."/>
            <person name="Paulsen I.T."/>
        </authorList>
    </citation>
    <scope>NUCLEOTIDE SEQUENCE [LARGE SCALE GENOMIC DNA]</scope>
    <source>
        <strain>DSM 24068 / PA7</strain>
    </source>
</reference>
<name>YACG_PSEP7</name>
<feature type="chain" id="PRO_1000061468" description="DNA gyrase inhibitor YacG">
    <location>
        <begin position="1"/>
        <end position="66"/>
    </location>
</feature>
<feature type="binding site" evidence="1">
    <location>
        <position position="9"/>
    </location>
    <ligand>
        <name>Zn(2+)</name>
        <dbReference type="ChEBI" id="CHEBI:29105"/>
    </ligand>
</feature>
<feature type="binding site" evidence="1">
    <location>
        <position position="12"/>
    </location>
    <ligand>
        <name>Zn(2+)</name>
        <dbReference type="ChEBI" id="CHEBI:29105"/>
    </ligand>
</feature>
<feature type="binding site" evidence="1">
    <location>
        <position position="28"/>
    </location>
    <ligand>
        <name>Zn(2+)</name>
        <dbReference type="ChEBI" id="CHEBI:29105"/>
    </ligand>
</feature>
<feature type="binding site" evidence="1">
    <location>
        <position position="32"/>
    </location>
    <ligand>
        <name>Zn(2+)</name>
        <dbReference type="ChEBI" id="CHEBI:29105"/>
    </ligand>
</feature>